<proteinExistence type="inferred from homology"/>
<evidence type="ECO:0000250" key="1"/>
<evidence type="ECO:0000256" key="2">
    <source>
        <dbReference type="SAM" id="MobiDB-lite"/>
    </source>
</evidence>
<evidence type="ECO:0000305" key="3"/>
<name>ARP6_CRYNB</name>
<keyword id="KW-0010">Activator</keyword>
<keyword id="KW-0156">Chromatin regulator</keyword>
<keyword id="KW-0963">Cytoplasm</keyword>
<keyword id="KW-0206">Cytoskeleton</keyword>
<keyword id="KW-0539">Nucleus</keyword>
<keyword id="KW-0804">Transcription</keyword>
<keyword id="KW-0805">Transcription regulation</keyword>
<dbReference type="EMBL" id="AAEY01000050">
    <property type="protein sequence ID" value="EAL18340.1"/>
    <property type="molecule type" value="Genomic_DNA"/>
</dbReference>
<dbReference type="RefSeq" id="XP_772987.1">
    <property type="nucleotide sequence ID" value="XM_767894.1"/>
</dbReference>
<dbReference type="SMR" id="P0CM05"/>
<dbReference type="EnsemblFungi" id="AAW45951">
    <property type="protein sequence ID" value="AAW45951"/>
    <property type="gene ID" value="CNJ00880"/>
</dbReference>
<dbReference type="GeneID" id="4938606"/>
<dbReference type="KEGG" id="cnb:CNBJ2630"/>
<dbReference type="VEuPathDB" id="FungiDB:CNBJ2630"/>
<dbReference type="HOGENOM" id="CLU_027965_1_1_1"/>
<dbReference type="OrthoDB" id="3025at5206"/>
<dbReference type="GO" id="GO:0005737">
    <property type="term" value="C:cytoplasm"/>
    <property type="evidence" value="ECO:0007669"/>
    <property type="project" value="UniProtKB-SubCell"/>
</dbReference>
<dbReference type="GO" id="GO:0005856">
    <property type="term" value="C:cytoskeleton"/>
    <property type="evidence" value="ECO:0007669"/>
    <property type="project" value="UniProtKB-SubCell"/>
</dbReference>
<dbReference type="GO" id="GO:0000812">
    <property type="term" value="C:Swr1 complex"/>
    <property type="evidence" value="ECO:0007669"/>
    <property type="project" value="EnsemblFungi"/>
</dbReference>
<dbReference type="GO" id="GO:0006338">
    <property type="term" value="P:chromatin remodeling"/>
    <property type="evidence" value="ECO:0007669"/>
    <property type="project" value="EnsemblFungi"/>
</dbReference>
<dbReference type="CDD" id="cd10210">
    <property type="entry name" value="ASKHA_NBD_Arp6"/>
    <property type="match status" value="1"/>
</dbReference>
<dbReference type="FunFam" id="2.30.36.70:FF:000003">
    <property type="entry name" value="Actin-related protein 6"/>
    <property type="match status" value="1"/>
</dbReference>
<dbReference type="Gene3D" id="3.30.420.40">
    <property type="match status" value="2"/>
</dbReference>
<dbReference type="Gene3D" id="2.30.36.70">
    <property type="entry name" value="Actin, Chain A, domain 2"/>
    <property type="match status" value="1"/>
</dbReference>
<dbReference type="Gene3D" id="3.90.640.10">
    <property type="entry name" value="Actin, Chain A, domain 4"/>
    <property type="match status" value="1"/>
</dbReference>
<dbReference type="InterPro" id="IPR004000">
    <property type="entry name" value="Actin"/>
</dbReference>
<dbReference type="InterPro" id="IPR043129">
    <property type="entry name" value="ATPase_NBD"/>
</dbReference>
<dbReference type="PANTHER" id="PTHR11937">
    <property type="entry name" value="ACTIN"/>
    <property type="match status" value="1"/>
</dbReference>
<dbReference type="Pfam" id="PF00022">
    <property type="entry name" value="Actin"/>
    <property type="match status" value="1"/>
</dbReference>
<dbReference type="SMART" id="SM00268">
    <property type="entry name" value="ACTIN"/>
    <property type="match status" value="1"/>
</dbReference>
<dbReference type="SUPFAM" id="SSF53067">
    <property type="entry name" value="Actin-like ATPase domain"/>
    <property type="match status" value="2"/>
</dbReference>
<protein>
    <recommendedName>
        <fullName>Actin-like protein ARP6</fullName>
    </recommendedName>
</protein>
<feature type="chain" id="PRO_0000410003" description="Actin-like protein ARP6">
    <location>
        <begin position="1"/>
        <end position="490"/>
    </location>
</feature>
<feature type="region of interest" description="Disordered" evidence="2">
    <location>
        <begin position="260"/>
        <end position="285"/>
    </location>
</feature>
<feature type="region of interest" description="Disordered" evidence="2">
    <location>
        <begin position="456"/>
        <end position="490"/>
    </location>
</feature>
<sequence length="490" mass="55010">MATPPVLIIDNGAYEIKAGISGVDWEPRVLPNSIARSRTEKRVYVGDEIDNCKDLSGIVYRRPFEKGMLVNWDAERIIWDRLFSPSVLNINPTETSLLVTEPYFNLPNIAETYDQMIFEEFEFQSYFRCAPAALIPYGGLYESDQGIPPQCTIVIDMGYSYTHVVPIRDGQIVWEHVKRIDVGGKLLTNHLKHLISFRQWNMIDQTHVVNSVREACGYVSLNWKGDLETCKAKPRKNPIIQEYVLPDFSANSTSRTGYIRSGPNAAPPEETNGTGEVNGKQKPEEEEQVLWMGNERFAGPELLFHPSDIGLKQTGLPETIAYVISQMPEELRGMFWAHIGIIGGLGNIENLGERLERDLQALCPVEYEIGIYEAFDPASLAYTSATALTSSEVYMSTYPVTRTEYFEQGSSLCRRKFGSFGAPAYNIDPPGFSSGVDARTEVSDDEMEMRYAMGLESKKGGKGKRRKEEEEVTSGNWGGRRRRTTGLGGF</sequence>
<accession>P0CM05</accession>
<accession>Q55KS0</accession>
<accession>Q5KAQ4</accession>
<organism>
    <name type="scientific">Cryptococcus neoformans var. neoformans serotype D (strain B-3501A)</name>
    <name type="common">Filobasidiella neoformans</name>
    <dbReference type="NCBI Taxonomy" id="283643"/>
    <lineage>
        <taxon>Eukaryota</taxon>
        <taxon>Fungi</taxon>
        <taxon>Dikarya</taxon>
        <taxon>Basidiomycota</taxon>
        <taxon>Agaricomycotina</taxon>
        <taxon>Tremellomycetes</taxon>
        <taxon>Tremellales</taxon>
        <taxon>Cryptococcaceae</taxon>
        <taxon>Cryptococcus</taxon>
        <taxon>Cryptococcus neoformans species complex</taxon>
    </lineage>
</organism>
<reference key="1">
    <citation type="journal article" date="2005" name="Science">
        <title>The genome of the basidiomycetous yeast and human pathogen Cryptococcus neoformans.</title>
        <authorList>
            <person name="Loftus B.J."/>
            <person name="Fung E."/>
            <person name="Roncaglia P."/>
            <person name="Rowley D."/>
            <person name="Amedeo P."/>
            <person name="Bruno D."/>
            <person name="Vamathevan J."/>
            <person name="Miranda M."/>
            <person name="Anderson I.J."/>
            <person name="Fraser J.A."/>
            <person name="Allen J.E."/>
            <person name="Bosdet I.E."/>
            <person name="Brent M.R."/>
            <person name="Chiu R."/>
            <person name="Doering T.L."/>
            <person name="Donlin M.J."/>
            <person name="D'Souza C.A."/>
            <person name="Fox D.S."/>
            <person name="Grinberg V."/>
            <person name="Fu J."/>
            <person name="Fukushima M."/>
            <person name="Haas B.J."/>
            <person name="Huang J.C."/>
            <person name="Janbon G."/>
            <person name="Jones S.J.M."/>
            <person name="Koo H.L."/>
            <person name="Krzywinski M.I."/>
            <person name="Kwon-Chung K.J."/>
            <person name="Lengeler K.B."/>
            <person name="Maiti R."/>
            <person name="Marra M.A."/>
            <person name="Marra R.E."/>
            <person name="Mathewson C.A."/>
            <person name="Mitchell T.G."/>
            <person name="Pertea M."/>
            <person name="Riggs F.R."/>
            <person name="Salzberg S.L."/>
            <person name="Schein J.E."/>
            <person name="Shvartsbeyn A."/>
            <person name="Shin H."/>
            <person name="Shumway M."/>
            <person name="Specht C.A."/>
            <person name="Suh B.B."/>
            <person name="Tenney A."/>
            <person name="Utterback T.R."/>
            <person name="Wickes B.L."/>
            <person name="Wortman J.R."/>
            <person name="Wye N.H."/>
            <person name="Kronstad J.W."/>
            <person name="Lodge J.K."/>
            <person name="Heitman J."/>
            <person name="Davis R.W."/>
            <person name="Fraser C.M."/>
            <person name="Hyman R.W."/>
        </authorList>
    </citation>
    <scope>NUCLEOTIDE SEQUENCE [LARGE SCALE GENOMIC DNA]</scope>
    <source>
        <strain>B-3501A</strain>
    </source>
</reference>
<comment type="function">
    <text evidence="1">Component of the SWR1 complex which mediates the ATP-dependent exchange of histone H2A for the H2A variant HZT1 leading to transcriptional regulation of selected genes by chromatin remodeling. Involved in chromosome stability (By similarity).</text>
</comment>
<comment type="subunit">
    <text evidence="1">Component of the SWR1 chromatin remodeling complex.</text>
</comment>
<comment type="subcellular location">
    <subcellularLocation>
        <location evidence="1">Cytoplasm</location>
    </subcellularLocation>
    <subcellularLocation>
        <location evidence="1">Cytoplasm</location>
        <location evidence="1">Cytoskeleton</location>
    </subcellularLocation>
    <subcellularLocation>
        <location evidence="1">Nucleus</location>
    </subcellularLocation>
</comment>
<comment type="similarity">
    <text evidence="3">Belongs to the actin family. ARP6 subfamily.</text>
</comment>
<gene>
    <name type="primary">ARP6</name>
    <name type="ordered locus">CNBJ2630</name>
</gene>